<gene>
    <name type="primary">JCHAIN</name>
</gene>
<proteinExistence type="evidence at protein level"/>
<reference key="1">
    <citation type="journal article" date="2015" name="Sci. Rep.">
        <title>Donkey genome and insight into the imprinting of fast karyotype evolution.</title>
        <authorList>
            <person name="Huang J."/>
            <person name="Zhao Y."/>
            <person name="Bai D."/>
            <person name="Shiraigol W."/>
            <person name="Li B."/>
            <person name="Yang L."/>
            <person name="Wu J."/>
            <person name="Bao W."/>
            <person name="Ren X."/>
            <person name="Jin B."/>
            <person name="Zhao Q."/>
            <person name="Li A."/>
            <person name="Bao S."/>
            <person name="Bao W."/>
            <person name="Xing Z."/>
            <person name="An A."/>
            <person name="Gao Y."/>
            <person name="Wei R."/>
            <person name="Bao Y."/>
            <person name="Bao T."/>
            <person name="Han H."/>
            <person name="Bai H."/>
            <person name="Bao Y."/>
            <person name="Zhang Y."/>
            <person name="Daidiikhuu D."/>
            <person name="Zhao W."/>
            <person name="Liu S."/>
            <person name="Ding J."/>
            <person name="Ye W."/>
            <person name="Ding F."/>
            <person name="Sun Z."/>
            <person name="Shi Y."/>
            <person name="Zhang Y."/>
            <person name="Meng H."/>
            <person name="Dugarjaviin M."/>
        </authorList>
    </citation>
    <scope>NUCLEOTIDE SEQUENCE [LARGE SCALE MRNA]</scope>
    <source>
        <tissue>Peripheral blood leukocyte</tissue>
    </source>
</reference>
<reference key="2">
    <citation type="journal article" date="2020" name="Int. J. Biol. Macromol.">
        <title>Sequence characterization and N-glycoproteomics of secretory immunoglobulin A from donkey milk.</title>
        <authorList>
            <person name="Gnanesh Kumar B.S."/>
            <person name="Rawal A."/>
        </authorList>
    </citation>
    <scope>PROTEIN SEQUENCE OF 45-59 AND 135-144</scope>
    <scope>IDENTIFICATION BY MASS SPECTROMETRY</scope>
    <scope>GLYCOSYLATION AT ASN-72</scope>
    <scope>SUBCELLULAR LOCATION</scope>
</reference>
<reference key="3">
    <citation type="journal article" date="2011" name="J. Proteomics">
        <title>Poppea's bath liquor: the secret proteome of she-donkey's milk.</title>
        <authorList>
            <person name="Cunsolo V."/>
            <person name="Muccilli V."/>
            <person name="Fasoli E."/>
            <person name="Saletti R."/>
            <person name="Righetti P.G."/>
            <person name="Foti S."/>
        </authorList>
    </citation>
    <scope>PROTEIN SEQUENCE OF 45-59; 82-94 AND 135-144</scope>
    <scope>IDENTIFICATION BY MASS SPECTROMETRY</scope>
    <scope>SUBCELLULAR LOCATION</scope>
</reference>
<comment type="function">
    <text evidence="2">Serves to link two monomer units of either IgM or IgA. In the case of IgM, the J chain-joined dimer is a nucleating unit for the IgM pentamer, and in the case of IgA it induces dimers and/or larger polymers. It also helps to bind these immunoglobulins to secretory component.</text>
</comment>
<comment type="subunit">
    <text evidence="1">Part of the secretory IgA (sIgA) complex that consists of two, four or five IgA monomers, and two additional non-Ig polypeptides, namely the JCHAIN and the secretory component (the proteolytic product of PIGR). Part of the secretory IgM (sIgM) complex that consist of five IgM monomers, and two additional non-Ig polypeptides, namely the JCHAIN and the secretory component (the proteolytic product of PIGR). JCHAIN-containing IgM interacts (via CH4 domain) with FCRM (via Ig-like domain).</text>
</comment>
<comment type="subcellular location">
    <subcellularLocation>
        <location evidence="4 5">Secreted</location>
    </subcellularLocation>
</comment>
<comment type="PTM">
    <text evidence="5">N-glycosylated. N-glycans attached to Asn-72 varies from truncated, differentially fucosylated to sialylated (NeuGc) complex types: Man3GlcNAc2; GlcNAc2Man3GlcNAc2(Fuc); Gal1GlcNAc1Man3GlcNAc2; GlcNAc2Man3GlcNAc2; GlcNAc1Man3GlcNAc2; GlcNAc1Man2GlcNAc2 and NeuGc1Gal1GlcNAc2Man3GlcNAc2.</text>
</comment>
<keyword id="KW-0903">Direct protein sequencing</keyword>
<keyword id="KW-1015">Disulfide bond</keyword>
<keyword id="KW-0325">Glycoprotein</keyword>
<keyword id="KW-1185">Reference proteome</keyword>
<keyword id="KW-0964">Secreted</keyword>
<keyword id="KW-0732">Signal</keyword>
<evidence type="ECO:0000250" key="1">
    <source>
        <dbReference type="UniProtKB" id="P01591"/>
    </source>
</evidence>
<evidence type="ECO:0000250" key="2">
    <source>
        <dbReference type="UniProtKB" id="P01592"/>
    </source>
</evidence>
<evidence type="ECO:0000255" key="3"/>
<evidence type="ECO:0000269" key="4">
    <source>
    </source>
</evidence>
<evidence type="ECO:0000269" key="5">
    <source>
    </source>
</evidence>
<evidence type="ECO:0000303" key="6">
    <source>
    </source>
</evidence>
<organism>
    <name type="scientific">Equus asinus</name>
    <name type="common">Donkey</name>
    <name type="synonym">Equus africanus asinus</name>
    <dbReference type="NCBI Taxonomy" id="9793"/>
    <lineage>
        <taxon>Eukaryota</taxon>
        <taxon>Metazoa</taxon>
        <taxon>Chordata</taxon>
        <taxon>Craniata</taxon>
        <taxon>Vertebrata</taxon>
        <taxon>Euteleostomi</taxon>
        <taxon>Mammalia</taxon>
        <taxon>Eutheria</taxon>
        <taxon>Laurasiatheria</taxon>
        <taxon>Perissodactyla</taxon>
        <taxon>Equidae</taxon>
        <taxon>Equus</taxon>
    </lineage>
</organism>
<sequence>MKNHLFFWGVLAIFVQAVLVTAGDEGERIVLADNKCKCVRVTSRIIPSPENPNEDILERHIRIIIPVNSRENISDPTSPVRTKFVYHLSDLCKKCDPVEVELDNQVVTASQSNICDEDSETCYAYDRNKCYTNRVPLTYGGQTKIVETALTPDSCYPD</sequence>
<feature type="signal peptide" evidence="1 3">
    <location>
        <begin position="1"/>
        <end position="22"/>
    </location>
</feature>
<feature type="chain" id="PRO_0000451037" description="Immunoglobulin J chain" evidence="3">
    <location>
        <begin position="23"/>
        <end position="158"/>
    </location>
</feature>
<feature type="glycosylation site" description="N-linked (GlcNAc...) (complex) asparagine" evidence="5">
    <location>
        <position position="72"/>
    </location>
</feature>
<feature type="disulfide bond" evidence="1">
    <location>
        <begin position="36"/>
        <end position="122"/>
    </location>
</feature>
<feature type="disulfide bond" description="Interchain (with heavy chain)" evidence="1">
    <location>
        <position position="38"/>
    </location>
</feature>
<feature type="disulfide bond" description="Interchain (with heavy chain)" evidence="1">
    <location>
        <position position="92"/>
    </location>
</feature>
<feature type="disulfide bond" evidence="1">
    <location>
        <begin position="95"/>
        <end position="115"/>
    </location>
</feature>
<feature type="disulfide bond" evidence="1">
    <location>
        <begin position="130"/>
        <end position="155"/>
    </location>
</feature>
<dbReference type="RefSeq" id="XP_014702706.1">
    <property type="nucleotide sequence ID" value="XM_014847220.3"/>
</dbReference>
<dbReference type="SMR" id="P0DUB2"/>
<dbReference type="GlyCosmos" id="P0DUB2">
    <property type="glycosylation" value="1 site, No reported glycans"/>
</dbReference>
<dbReference type="iPTMnet" id="P0DUB2"/>
<dbReference type="Ensembl" id="ENSEAST00005052250.1">
    <property type="protein sequence ID" value="ENSEASP00005039220.1"/>
    <property type="gene ID" value="ENSEASG00005026604.1"/>
</dbReference>
<dbReference type="GeneID" id="106835097"/>
<dbReference type="KEGG" id="eai:106835097"/>
<dbReference type="CTD" id="3512"/>
<dbReference type="GeneTree" id="ENSGT00390000012791"/>
<dbReference type="OMA" id="KCQCARV"/>
<dbReference type="OrthoDB" id="106589at314145"/>
<dbReference type="Proteomes" id="UP000694387">
    <property type="component" value="Chromosome 3"/>
</dbReference>
<dbReference type="GO" id="GO:0071756">
    <property type="term" value="C:pentameric IgM immunoglobulin complex"/>
    <property type="evidence" value="ECO:0000250"/>
    <property type="project" value="UniProtKB"/>
</dbReference>
<dbReference type="GO" id="GO:0034987">
    <property type="term" value="F:immunoglobulin receptor binding"/>
    <property type="evidence" value="ECO:0007669"/>
    <property type="project" value="TreeGrafter"/>
</dbReference>
<dbReference type="GO" id="GO:0006959">
    <property type="term" value="P:humoral immune response"/>
    <property type="evidence" value="ECO:0007669"/>
    <property type="project" value="TreeGrafter"/>
</dbReference>
<dbReference type="InterPro" id="IPR024110">
    <property type="entry name" value="Ig_J"/>
</dbReference>
<dbReference type="PANTHER" id="PTHR10070">
    <property type="entry name" value="IMMUNOGLOBULIN J CHAIN"/>
    <property type="match status" value="1"/>
</dbReference>
<dbReference type="PANTHER" id="PTHR10070:SF2">
    <property type="entry name" value="IMMUNOGLOBULIN J CHAIN"/>
    <property type="match status" value="1"/>
</dbReference>
<dbReference type="Pfam" id="PF15097">
    <property type="entry name" value="Ig_J_chain"/>
    <property type="match status" value="1"/>
</dbReference>
<name>IGJ_EQUAS</name>
<protein>
    <recommendedName>
        <fullName evidence="6">Immunoglobulin J chain</fullName>
    </recommendedName>
    <alternativeName>
        <fullName>Joining chain of multimeric IgA and IgM</fullName>
    </alternativeName>
</protein>
<accession>P0DUB2</accession>